<protein>
    <recommendedName>
        <fullName evidence="1">Type III pantothenate kinase</fullName>
        <ecNumber evidence="1">2.7.1.33</ecNumber>
    </recommendedName>
    <alternativeName>
        <fullName evidence="1">PanK-III</fullName>
    </alternativeName>
    <alternativeName>
        <fullName evidence="1">Pantothenic acid kinase</fullName>
    </alternativeName>
</protein>
<feature type="chain" id="PRO_1000165194" description="Type III pantothenate kinase">
    <location>
        <begin position="1"/>
        <end position="263"/>
    </location>
</feature>
<feature type="active site" description="Proton acceptor" evidence="1">
    <location>
        <position position="112"/>
    </location>
</feature>
<feature type="binding site" evidence="1">
    <location>
        <begin position="9"/>
        <end position="16"/>
    </location>
    <ligand>
        <name>ATP</name>
        <dbReference type="ChEBI" id="CHEBI:30616"/>
    </ligand>
</feature>
<feature type="binding site" evidence="1">
    <location>
        <position position="103"/>
    </location>
    <ligand>
        <name>substrate</name>
    </ligand>
</feature>
<feature type="binding site" evidence="1">
    <location>
        <begin position="110"/>
        <end position="113"/>
    </location>
    <ligand>
        <name>substrate</name>
    </ligand>
</feature>
<feature type="binding site" evidence="1">
    <location>
        <position position="134"/>
    </location>
    <ligand>
        <name>K(+)</name>
        <dbReference type="ChEBI" id="CHEBI:29103"/>
    </ligand>
</feature>
<feature type="binding site" evidence="1">
    <location>
        <position position="137"/>
    </location>
    <ligand>
        <name>ATP</name>
        <dbReference type="ChEBI" id="CHEBI:30616"/>
    </ligand>
</feature>
<feature type="binding site" evidence="1">
    <location>
        <position position="190"/>
    </location>
    <ligand>
        <name>substrate</name>
    </ligand>
</feature>
<comment type="function">
    <text evidence="1">Catalyzes the phosphorylation of pantothenate (Pan), the first step in CoA biosynthesis.</text>
</comment>
<comment type="catalytic activity">
    <reaction evidence="1">
        <text>(R)-pantothenate + ATP = (R)-4'-phosphopantothenate + ADP + H(+)</text>
        <dbReference type="Rhea" id="RHEA:16373"/>
        <dbReference type="ChEBI" id="CHEBI:10986"/>
        <dbReference type="ChEBI" id="CHEBI:15378"/>
        <dbReference type="ChEBI" id="CHEBI:29032"/>
        <dbReference type="ChEBI" id="CHEBI:30616"/>
        <dbReference type="ChEBI" id="CHEBI:456216"/>
        <dbReference type="EC" id="2.7.1.33"/>
    </reaction>
</comment>
<comment type="cofactor">
    <cofactor evidence="1">
        <name>NH4(+)</name>
        <dbReference type="ChEBI" id="CHEBI:28938"/>
    </cofactor>
    <cofactor evidence="1">
        <name>K(+)</name>
        <dbReference type="ChEBI" id="CHEBI:29103"/>
    </cofactor>
    <text evidence="1">A monovalent cation. Ammonium or potassium.</text>
</comment>
<comment type="pathway">
    <text evidence="1">Cofactor biosynthesis; coenzyme A biosynthesis; CoA from (R)-pantothenate: step 1/5.</text>
</comment>
<comment type="subunit">
    <text evidence="1">Homodimer.</text>
</comment>
<comment type="subcellular location">
    <subcellularLocation>
        <location evidence="1">Cytoplasm</location>
    </subcellularLocation>
</comment>
<comment type="similarity">
    <text evidence="1">Belongs to the type III pantothenate kinase family.</text>
</comment>
<dbReference type="EC" id="2.7.1.33" evidence="1"/>
<dbReference type="EMBL" id="CP001358">
    <property type="protein sequence ID" value="ACL50113.1"/>
    <property type="molecule type" value="Genomic_DNA"/>
</dbReference>
<dbReference type="SMR" id="B8J468"/>
<dbReference type="STRING" id="525146.Ddes_2217"/>
<dbReference type="KEGG" id="dds:Ddes_2217"/>
<dbReference type="eggNOG" id="COG1521">
    <property type="taxonomic scope" value="Bacteria"/>
</dbReference>
<dbReference type="HOGENOM" id="CLU_066627_1_0_7"/>
<dbReference type="UniPathway" id="UPA00241">
    <property type="reaction ID" value="UER00352"/>
</dbReference>
<dbReference type="GO" id="GO:0005737">
    <property type="term" value="C:cytoplasm"/>
    <property type="evidence" value="ECO:0007669"/>
    <property type="project" value="UniProtKB-SubCell"/>
</dbReference>
<dbReference type="GO" id="GO:0005524">
    <property type="term" value="F:ATP binding"/>
    <property type="evidence" value="ECO:0007669"/>
    <property type="project" value="UniProtKB-UniRule"/>
</dbReference>
<dbReference type="GO" id="GO:0046872">
    <property type="term" value="F:metal ion binding"/>
    <property type="evidence" value="ECO:0007669"/>
    <property type="project" value="UniProtKB-KW"/>
</dbReference>
<dbReference type="GO" id="GO:0004594">
    <property type="term" value="F:pantothenate kinase activity"/>
    <property type="evidence" value="ECO:0007669"/>
    <property type="project" value="UniProtKB-UniRule"/>
</dbReference>
<dbReference type="GO" id="GO:0015937">
    <property type="term" value="P:coenzyme A biosynthetic process"/>
    <property type="evidence" value="ECO:0007669"/>
    <property type="project" value="UniProtKB-UniRule"/>
</dbReference>
<dbReference type="CDD" id="cd24015">
    <property type="entry name" value="ASKHA_NBD_PanK-III"/>
    <property type="match status" value="1"/>
</dbReference>
<dbReference type="Gene3D" id="3.30.420.40">
    <property type="match status" value="2"/>
</dbReference>
<dbReference type="HAMAP" id="MF_01274">
    <property type="entry name" value="Pantothen_kinase_3"/>
    <property type="match status" value="1"/>
</dbReference>
<dbReference type="InterPro" id="IPR043129">
    <property type="entry name" value="ATPase_NBD"/>
</dbReference>
<dbReference type="InterPro" id="IPR004619">
    <property type="entry name" value="Type_III_PanK"/>
</dbReference>
<dbReference type="NCBIfam" id="TIGR00671">
    <property type="entry name" value="baf"/>
    <property type="match status" value="1"/>
</dbReference>
<dbReference type="NCBIfam" id="NF009855">
    <property type="entry name" value="PRK13321.1"/>
    <property type="match status" value="1"/>
</dbReference>
<dbReference type="PANTHER" id="PTHR34265">
    <property type="entry name" value="TYPE III PANTOTHENATE KINASE"/>
    <property type="match status" value="1"/>
</dbReference>
<dbReference type="PANTHER" id="PTHR34265:SF1">
    <property type="entry name" value="TYPE III PANTOTHENATE KINASE"/>
    <property type="match status" value="1"/>
</dbReference>
<dbReference type="Pfam" id="PF03309">
    <property type="entry name" value="Pan_kinase"/>
    <property type="match status" value="1"/>
</dbReference>
<dbReference type="SUPFAM" id="SSF53067">
    <property type="entry name" value="Actin-like ATPase domain"/>
    <property type="match status" value="2"/>
</dbReference>
<organism>
    <name type="scientific">Desulfovibrio desulfuricans (strain ATCC 27774 / DSM 6949 / MB)</name>
    <dbReference type="NCBI Taxonomy" id="525146"/>
    <lineage>
        <taxon>Bacteria</taxon>
        <taxon>Pseudomonadati</taxon>
        <taxon>Thermodesulfobacteriota</taxon>
        <taxon>Desulfovibrionia</taxon>
        <taxon>Desulfovibrionales</taxon>
        <taxon>Desulfovibrionaceae</taxon>
        <taxon>Desulfovibrio</taxon>
    </lineage>
</organism>
<proteinExistence type="inferred from homology"/>
<evidence type="ECO:0000255" key="1">
    <source>
        <dbReference type="HAMAP-Rule" id="MF_01274"/>
    </source>
</evidence>
<gene>
    <name evidence="1" type="primary">coaX</name>
    <name type="ordered locus">Ddes_2217</name>
</gene>
<name>COAX_DESDA</name>
<accession>B8J468</accession>
<reference key="1">
    <citation type="submission" date="2009-01" db="EMBL/GenBank/DDBJ databases">
        <title>Complete sequence of Desulfovibrio desulfuricans subsp. desulfuricans str. ATCC 27774.</title>
        <authorList>
            <consortium name="US DOE Joint Genome Institute"/>
            <person name="Lucas S."/>
            <person name="Copeland A."/>
            <person name="Lapidus A."/>
            <person name="Glavina del Rio T."/>
            <person name="Tice H."/>
            <person name="Bruce D."/>
            <person name="Goodwin L."/>
            <person name="Pitluck S."/>
            <person name="Sims D."/>
            <person name="Lu M."/>
            <person name="Kiss H."/>
            <person name="Meineke L."/>
            <person name="Brettin T."/>
            <person name="Detter J.C."/>
            <person name="Han C."/>
            <person name="Larimer F."/>
            <person name="Land M."/>
            <person name="Hauser L."/>
            <person name="Kyrpides N."/>
            <person name="Ovchinnikova G."/>
            <person name="Hazen T.C."/>
        </authorList>
    </citation>
    <scope>NUCLEOTIDE SEQUENCE [LARGE SCALE GENOMIC DNA]</scope>
    <source>
        <strain>ATCC 27774 / DSM 6949 / MB</strain>
    </source>
</reference>
<keyword id="KW-0067">ATP-binding</keyword>
<keyword id="KW-0173">Coenzyme A biosynthesis</keyword>
<keyword id="KW-0963">Cytoplasm</keyword>
<keyword id="KW-0418">Kinase</keyword>
<keyword id="KW-0479">Metal-binding</keyword>
<keyword id="KW-0547">Nucleotide-binding</keyword>
<keyword id="KW-0630">Potassium</keyword>
<keyword id="KW-0808">Transferase</keyword>
<sequence length="263" mass="28245">MQPELLLFDIGNTSIKIGLAHERQVVTSYTLRTDAGQTADDLGLKLATLLGHAGVTPQSLRACVASSVVPGFDPLLREAVARYVDCPLYRVGADLSVPLENRYERPAEVGADRLVGAYAARRLYPEFPGLLVVDFGTAVTIDCVNGNAYMGGLIFPGPRTALSALSREAAKLPRVNLDVRADEPTPGRSTATSIQHGLVFGFACMVEGLAQRLKRQLPGPARVLGTGGFAASIARVSPVFDHVLPALLLEGLRRLYYEERTAF</sequence>